<sequence length="847" mass="95816">MFRCWSAILILGFIFLASEGRPTKESGYGLKSYQPLTRLRHKQEKSQESSRIKEFLIHDGPFGSCENKYCGLGRHCVINRETRHAECACMDLCKQHYKPVCGSDGEFYENHCEVHRAACLKKQKITIVHNEDCFFEGDNCMAIEYSKMKSMLLDLQNQKYITQENENPNSDDISRKKPLVDQMFKYFDADSNGLVDINELTQVIKQEELNKDLSDCTLYDLLKYDDFNADKHLALEEFYRAFQVIQLSLPEDQRVSITAATVGQSAVLSCAIVGTLRPPIIWKRNNIVLNNLDLEDINDFGDDGSLYITKVTTVHMGNYTCYADGYENVRQTHIFQVNVPPVIRVYPESQAREPGVTASLRCHAEGIPDPQLGWLKNGIDITPKLSKQLTLQANGSEVHISNVRYEDTGAYTCIARNEAGVDEDISSLFVEDSARKTLANILWREEGLGIGNMFYVFYEDGIKVIQPTECEFQRHIKPSEKLLGYQDEVCPKAEEDEVQRCVWASAVNVKDKFIYVAQPTLDRILIVDVQSQKVVQAVSTDPVPVKLHYDKSHDQVWVLSWGSMEKTSPTLQVITLASGNVPHHTIHTQPVGKQFDRVDDFFIPTPTLIITHMRFGFILHKDESALHKIDLETMSYIKTINLKDSRCIPLSLAYTHLGGYYFISCKADITGATPPQLVVDSVTDSIIGFNSDVTGTPYVSPDGHYLVSVNDVKGLVRVQYITIRGEILDAFDIHTNLHISDLAFQPSFTEAHQYNIYGSSSQQTDVLFVELSSGKVKMIKSLKEPLKTEDWPWSQKNRHIQGSGLFGQYLMTPSKDSLFILDGRLNKLNCEITEVQKGNTVVWVGDA</sequence>
<accession>Q8BFR2</accession>
<accession>Q80TG3</accession>
<accession>Q8C4T3</accession>
<evidence type="ECO:0000250" key="1"/>
<evidence type="ECO:0000255" key="2"/>
<evidence type="ECO:0000255" key="3">
    <source>
        <dbReference type="PROSITE-ProRule" id="PRU00448"/>
    </source>
</evidence>
<evidence type="ECO:0000255" key="4">
    <source>
        <dbReference type="PROSITE-ProRule" id="PRU00798"/>
    </source>
</evidence>
<evidence type="ECO:0000255" key="5">
    <source>
        <dbReference type="PROSITE-ProRule" id="PRU10142"/>
    </source>
</evidence>
<evidence type="ECO:0000305" key="6"/>
<protein>
    <recommendedName>
        <fullName>Follistatin-related protein 5</fullName>
    </recommendedName>
    <alternativeName>
        <fullName>Follistatin-like protein 5</fullName>
    </alternativeName>
    <alternativeName>
        <fullName>m-D/Bsp120I 1-2</fullName>
    </alternativeName>
</protein>
<reference key="1">
    <citation type="submission" date="2001-04" db="EMBL/GenBank/DDBJ databases">
        <title>Identification of m-D/Bsp120I 1-2.</title>
        <authorList>
            <person name="Kato A."/>
            <person name="Noda M."/>
        </authorList>
    </citation>
    <scope>NUCLEOTIDE SEQUENCE [MRNA]</scope>
</reference>
<reference key="2">
    <citation type="journal article" date="2005" name="Science">
        <title>The transcriptional landscape of the mammalian genome.</title>
        <authorList>
            <person name="Carninci P."/>
            <person name="Kasukawa T."/>
            <person name="Katayama S."/>
            <person name="Gough J."/>
            <person name="Frith M.C."/>
            <person name="Maeda N."/>
            <person name="Oyama R."/>
            <person name="Ravasi T."/>
            <person name="Lenhard B."/>
            <person name="Wells C."/>
            <person name="Kodzius R."/>
            <person name="Shimokawa K."/>
            <person name="Bajic V.B."/>
            <person name="Brenner S.E."/>
            <person name="Batalov S."/>
            <person name="Forrest A.R."/>
            <person name="Zavolan M."/>
            <person name="Davis M.J."/>
            <person name="Wilming L.G."/>
            <person name="Aidinis V."/>
            <person name="Allen J.E."/>
            <person name="Ambesi-Impiombato A."/>
            <person name="Apweiler R."/>
            <person name="Aturaliya R.N."/>
            <person name="Bailey T.L."/>
            <person name="Bansal M."/>
            <person name="Baxter L."/>
            <person name="Beisel K.W."/>
            <person name="Bersano T."/>
            <person name="Bono H."/>
            <person name="Chalk A.M."/>
            <person name="Chiu K.P."/>
            <person name="Choudhary V."/>
            <person name="Christoffels A."/>
            <person name="Clutterbuck D.R."/>
            <person name="Crowe M.L."/>
            <person name="Dalla E."/>
            <person name="Dalrymple B.P."/>
            <person name="de Bono B."/>
            <person name="Della Gatta G."/>
            <person name="di Bernardo D."/>
            <person name="Down T."/>
            <person name="Engstrom P."/>
            <person name="Fagiolini M."/>
            <person name="Faulkner G."/>
            <person name="Fletcher C.F."/>
            <person name="Fukushima T."/>
            <person name="Furuno M."/>
            <person name="Futaki S."/>
            <person name="Gariboldi M."/>
            <person name="Georgii-Hemming P."/>
            <person name="Gingeras T.R."/>
            <person name="Gojobori T."/>
            <person name="Green R.E."/>
            <person name="Gustincich S."/>
            <person name="Harbers M."/>
            <person name="Hayashi Y."/>
            <person name="Hensch T.K."/>
            <person name="Hirokawa N."/>
            <person name="Hill D."/>
            <person name="Huminiecki L."/>
            <person name="Iacono M."/>
            <person name="Ikeo K."/>
            <person name="Iwama A."/>
            <person name="Ishikawa T."/>
            <person name="Jakt M."/>
            <person name="Kanapin A."/>
            <person name="Katoh M."/>
            <person name="Kawasawa Y."/>
            <person name="Kelso J."/>
            <person name="Kitamura H."/>
            <person name="Kitano H."/>
            <person name="Kollias G."/>
            <person name="Krishnan S.P."/>
            <person name="Kruger A."/>
            <person name="Kummerfeld S.K."/>
            <person name="Kurochkin I.V."/>
            <person name="Lareau L.F."/>
            <person name="Lazarevic D."/>
            <person name="Lipovich L."/>
            <person name="Liu J."/>
            <person name="Liuni S."/>
            <person name="McWilliam S."/>
            <person name="Madan Babu M."/>
            <person name="Madera M."/>
            <person name="Marchionni L."/>
            <person name="Matsuda H."/>
            <person name="Matsuzawa S."/>
            <person name="Miki H."/>
            <person name="Mignone F."/>
            <person name="Miyake S."/>
            <person name="Morris K."/>
            <person name="Mottagui-Tabar S."/>
            <person name="Mulder N."/>
            <person name="Nakano N."/>
            <person name="Nakauchi H."/>
            <person name="Ng P."/>
            <person name="Nilsson R."/>
            <person name="Nishiguchi S."/>
            <person name="Nishikawa S."/>
            <person name="Nori F."/>
            <person name="Ohara O."/>
            <person name="Okazaki Y."/>
            <person name="Orlando V."/>
            <person name="Pang K.C."/>
            <person name="Pavan W.J."/>
            <person name="Pavesi G."/>
            <person name="Pesole G."/>
            <person name="Petrovsky N."/>
            <person name="Piazza S."/>
            <person name="Reed J."/>
            <person name="Reid J.F."/>
            <person name="Ring B.Z."/>
            <person name="Ringwald M."/>
            <person name="Rost B."/>
            <person name="Ruan Y."/>
            <person name="Salzberg S.L."/>
            <person name="Sandelin A."/>
            <person name="Schneider C."/>
            <person name="Schoenbach C."/>
            <person name="Sekiguchi K."/>
            <person name="Semple C.A."/>
            <person name="Seno S."/>
            <person name="Sessa L."/>
            <person name="Sheng Y."/>
            <person name="Shibata Y."/>
            <person name="Shimada H."/>
            <person name="Shimada K."/>
            <person name="Silva D."/>
            <person name="Sinclair B."/>
            <person name="Sperling S."/>
            <person name="Stupka E."/>
            <person name="Sugiura K."/>
            <person name="Sultana R."/>
            <person name="Takenaka Y."/>
            <person name="Taki K."/>
            <person name="Tammoja K."/>
            <person name="Tan S.L."/>
            <person name="Tang S."/>
            <person name="Taylor M.S."/>
            <person name="Tegner J."/>
            <person name="Teichmann S.A."/>
            <person name="Ueda H.R."/>
            <person name="van Nimwegen E."/>
            <person name="Verardo R."/>
            <person name="Wei C.L."/>
            <person name="Yagi K."/>
            <person name="Yamanishi H."/>
            <person name="Zabarovsky E."/>
            <person name="Zhu S."/>
            <person name="Zimmer A."/>
            <person name="Hide W."/>
            <person name="Bult C."/>
            <person name="Grimmond S.M."/>
            <person name="Teasdale R.D."/>
            <person name="Liu E.T."/>
            <person name="Brusic V."/>
            <person name="Quackenbush J."/>
            <person name="Wahlestedt C."/>
            <person name="Mattick J.S."/>
            <person name="Hume D.A."/>
            <person name="Kai C."/>
            <person name="Sasaki D."/>
            <person name="Tomaru Y."/>
            <person name="Fukuda S."/>
            <person name="Kanamori-Katayama M."/>
            <person name="Suzuki M."/>
            <person name="Aoki J."/>
            <person name="Arakawa T."/>
            <person name="Iida J."/>
            <person name="Imamura K."/>
            <person name="Itoh M."/>
            <person name="Kato T."/>
            <person name="Kawaji H."/>
            <person name="Kawagashira N."/>
            <person name="Kawashima T."/>
            <person name="Kojima M."/>
            <person name="Kondo S."/>
            <person name="Konno H."/>
            <person name="Nakano K."/>
            <person name="Ninomiya N."/>
            <person name="Nishio T."/>
            <person name="Okada M."/>
            <person name="Plessy C."/>
            <person name="Shibata K."/>
            <person name="Shiraki T."/>
            <person name="Suzuki S."/>
            <person name="Tagami M."/>
            <person name="Waki K."/>
            <person name="Watahiki A."/>
            <person name="Okamura-Oho Y."/>
            <person name="Suzuki H."/>
            <person name="Kawai J."/>
            <person name="Hayashizaki Y."/>
        </authorList>
    </citation>
    <scope>NUCLEOTIDE SEQUENCE [LARGE SCALE MRNA]</scope>
    <source>
        <strain>C57BL/6J</strain>
        <tissue>Cecum</tissue>
        <tissue>Cerebellum</tissue>
        <tissue>Corpora quadrigemina</tissue>
    </source>
</reference>
<reference key="3">
    <citation type="journal article" date="2004" name="Genome Res.">
        <title>The status, quality, and expansion of the NIH full-length cDNA project: the Mammalian Gene Collection (MGC).</title>
        <authorList>
            <consortium name="The MGC Project Team"/>
        </authorList>
    </citation>
    <scope>NUCLEOTIDE SEQUENCE [LARGE SCALE MRNA]</scope>
    <source>
        <strain>C57BL/6J</strain>
        <tissue>Brain</tissue>
    </source>
</reference>
<reference key="4">
    <citation type="journal article" date="2003" name="DNA Res.">
        <title>Prediction of the coding sequences of mouse homologues of KIAA gene: II. The complete nucleotide sequences of 400 mouse KIAA-homologous cDNAs identified by screening of terminal sequences of cDNA clones randomly sampled from size-fractionated libraries.</title>
        <authorList>
            <person name="Okazaki N."/>
            <person name="Kikuno R."/>
            <person name="Ohara R."/>
            <person name="Inamoto S."/>
            <person name="Aizawa H."/>
            <person name="Yuasa S."/>
            <person name="Nakajima D."/>
            <person name="Nagase T."/>
            <person name="Ohara O."/>
            <person name="Koga H."/>
        </authorList>
    </citation>
    <scope>NUCLEOTIDE SEQUENCE [LARGE SCALE MRNA] OF 402-847</scope>
    <source>
        <tissue>Brain</tissue>
    </source>
</reference>
<keyword id="KW-0106">Calcium</keyword>
<keyword id="KW-1015">Disulfide bond</keyword>
<keyword id="KW-0325">Glycoprotein</keyword>
<keyword id="KW-0393">Immunoglobulin domain</keyword>
<keyword id="KW-0479">Metal-binding</keyword>
<keyword id="KW-1185">Reference proteome</keyword>
<keyword id="KW-0677">Repeat</keyword>
<keyword id="KW-0964">Secreted</keyword>
<keyword id="KW-0732">Signal</keyword>
<gene>
    <name type="primary">Fstl5</name>
    <name type="synonym">Kiaa1263</name>
</gene>
<organism>
    <name type="scientific">Mus musculus</name>
    <name type="common">Mouse</name>
    <dbReference type="NCBI Taxonomy" id="10090"/>
    <lineage>
        <taxon>Eukaryota</taxon>
        <taxon>Metazoa</taxon>
        <taxon>Chordata</taxon>
        <taxon>Craniata</taxon>
        <taxon>Vertebrata</taxon>
        <taxon>Euteleostomi</taxon>
        <taxon>Mammalia</taxon>
        <taxon>Eutheria</taxon>
        <taxon>Euarchontoglires</taxon>
        <taxon>Glires</taxon>
        <taxon>Rodentia</taxon>
        <taxon>Myomorpha</taxon>
        <taxon>Muroidea</taxon>
        <taxon>Muridae</taxon>
        <taxon>Murinae</taxon>
        <taxon>Mus</taxon>
        <taxon>Mus</taxon>
    </lineage>
</organism>
<dbReference type="EMBL" id="AF374460">
    <property type="protein sequence ID" value="AAQ02778.1"/>
    <property type="molecule type" value="mRNA"/>
</dbReference>
<dbReference type="EMBL" id="AK033652">
    <property type="protein sequence ID" value="BAC28408.1"/>
    <property type="molecule type" value="mRNA"/>
</dbReference>
<dbReference type="EMBL" id="AK046070">
    <property type="protein sequence ID" value="BAC32590.1"/>
    <property type="molecule type" value="mRNA"/>
</dbReference>
<dbReference type="EMBL" id="AK081152">
    <property type="protein sequence ID" value="BAC38146.1"/>
    <property type="molecule type" value="mRNA"/>
</dbReference>
<dbReference type="EMBL" id="BC075640">
    <property type="protein sequence ID" value="AAH75640.1"/>
    <property type="molecule type" value="mRNA"/>
</dbReference>
<dbReference type="EMBL" id="AK122482">
    <property type="protein sequence ID" value="BAC65764.1"/>
    <property type="molecule type" value="mRNA"/>
</dbReference>
<dbReference type="CCDS" id="CCDS38455.1"/>
<dbReference type="RefSeq" id="NP_001240648.1">
    <property type="nucleotide sequence ID" value="NM_001253719.1"/>
</dbReference>
<dbReference type="RefSeq" id="NP_848788.2">
    <property type="nucleotide sequence ID" value="NM_178673.4"/>
</dbReference>
<dbReference type="RefSeq" id="XP_030108393.1">
    <property type="nucleotide sequence ID" value="XM_030252533.2"/>
</dbReference>
<dbReference type="FunCoup" id="Q8BFR2">
    <property type="interactions" value="304"/>
</dbReference>
<dbReference type="STRING" id="10090.ENSMUSP00000038506"/>
<dbReference type="MEROPS" id="I01.977"/>
<dbReference type="GlyCosmos" id="Q8BFR2">
    <property type="glycosylation" value="2 sites, No reported glycans"/>
</dbReference>
<dbReference type="GlyGen" id="Q8BFR2">
    <property type="glycosylation" value="2 sites, 2 N-linked glycans (2 sites)"/>
</dbReference>
<dbReference type="iPTMnet" id="Q8BFR2"/>
<dbReference type="PhosphoSitePlus" id="Q8BFR2"/>
<dbReference type="PaxDb" id="10090-ENSMUSP00000038506"/>
<dbReference type="ProteomicsDB" id="266876"/>
<dbReference type="Antibodypedia" id="28231">
    <property type="antibodies" value="102 antibodies from 19 providers"/>
</dbReference>
<dbReference type="Ensembl" id="ENSMUST00000038364.15">
    <property type="protein sequence ID" value="ENSMUSP00000038506.9"/>
    <property type="gene ID" value="ENSMUSG00000034098.15"/>
</dbReference>
<dbReference type="Ensembl" id="ENSMUST00000160261.8">
    <property type="protein sequence ID" value="ENSMUSP00000125393.2"/>
    <property type="gene ID" value="ENSMUSG00000034098.15"/>
</dbReference>
<dbReference type="GeneID" id="213262"/>
<dbReference type="KEGG" id="mmu:213262"/>
<dbReference type="UCSC" id="uc008pnj.2">
    <property type="organism name" value="mouse"/>
</dbReference>
<dbReference type="AGR" id="MGI:2442179"/>
<dbReference type="CTD" id="56884"/>
<dbReference type="MGI" id="MGI:2442179">
    <property type="gene designation" value="Fstl5"/>
</dbReference>
<dbReference type="VEuPathDB" id="HostDB:ENSMUSG00000034098"/>
<dbReference type="eggNOG" id="ENOG502QPNV">
    <property type="taxonomic scope" value="Eukaryota"/>
</dbReference>
<dbReference type="GeneTree" id="ENSGT00940000156495"/>
<dbReference type="HOGENOM" id="CLU_007849_1_0_1"/>
<dbReference type="InParanoid" id="Q8BFR2"/>
<dbReference type="OMA" id="IHAGNYT"/>
<dbReference type="OrthoDB" id="6085115at2759"/>
<dbReference type="PhylomeDB" id="Q8BFR2"/>
<dbReference type="TreeFam" id="TF350473"/>
<dbReference type="BioGRID-ORCS" id="213262">
    <property type="hits" value="3 hits in 77 CRISPR screens"/>
</dbReference>
<dbReference type="ChiTaRS" id="Fstl5">
    <property type="organism name" value="mouse"/>
</dbReference>
<dbReference type="PRO" id="PR:Q8BFR2"/>
<dbReference type="Proteomes" id="UP000000589">
    <property type="component" value="Chromosome 3"/>
</dbReference>
<dbReference type="RNAct" id="Q8BFR2">
    <property type="molecule type" value="protein"/>
</dbReference>
<dbReference type="Bgee" id="ENSMUSG00000034098">
    <property type="expression patterns" value="Expressed in olfactory epithelium and 99 other cell types or tissues"/>
</dbReference>
<dbReference type="ExpressionAtlas" id="Q8BFR2">
    <property type="expression patterns" value="baseline and differential"/>
</dbReference>
<dbReference type="GO" id="GO:0005576">
    <property type="term" value="C:extracellular region"/>
    <property type="evidence" value="ECO:0007669"/>
    <property type="project" value="UniProtKB-SubCell"/>
</dbReference>
<dbReference type="GO" id="GO:0005509">
    <property type="term" value="F:calcium ion binding"/>
    <property type="evidence" value="ECO:0007669"/>
    <property type="project" value="InterPro"/>
</dbReference>
<dbReference type="CDD" id="cd00096">
    <property type="entry name" value="Ig"/>
    <property type="match status" value="1"/>
</dbReference>
<dbReference type="CDD" id="cd05736">
    <property type="entry name" value="IgI_2_Follistatin_like"/>
    <property type="match status" value="1"/>
</dbReference>
<dbReference type="CDD" id="cd00104">
    <property type="entry name" value="KAZAL_FS"/>
    <property type="match status" value="1"/>
</dbReference>
<dbReference type="FunFam" id="2.60.40.10:FF:000653">
    <property type="entry name" value="Follistatin like 4"/>
    <property type="match status" value="1"/>
</dbReference>
<dbReference type="FunFam" id="2.60.40.10:FF:002358">
    <property type="entry name" value="Follistatin like 4"/>
    <property type="match status" value="1"/>
</dbReference>
<dbReference type="FunFam" id="3.30.60.30:FF:000007">
    <property type="entry name" value="follistatin-related protein 5 isoform X1"/>
    <property type="match status" value="1"/>
</dbReference>
<dbReference type="FunFam" id="1.10.238.10:FF:000140">
    <property type="entry name" value="follistatin-related protein 5 isoform X2"/>
    <property type="match status" value="1"/>
</dbReference>
<dbReference type="Gene3D" id="3.30.60.30">
    <property type="match status" value="1"/>
</dbReference>
<dbReference type="Gene3D" id="1.10.238.10">
    <property type="entry name" value="EF-hand"/>
    <property type="match status" value="1"/>
</dbReference>
<dbReference type="Gene3D" id="2.60.40.10">
    <property type="entry name" value="Immunoglobulins"/>
    <property type="match status" value="2"/>
</dbReference>
<dbReference type="Gene3D" id="2.130.10.10">
    <property type="entry name" value="YVTN repeat-like/Quinoprotein amine dehydrogenase"/>
    <property type="match status" value="1"/>
</dbReference>
<dbReference type="InterPro" id="IPR011992">
    <property type="entry name" value="EF-hand-dom_pair"/>
</dbReference>
<dbReference type="InterPro" id="IPR018247">
    <property type="entry name" value="EF_Hand_1_Ca_BS"/>
</dbReference>
<dbReference type="InterPro" id="IPR002048">
    <property type="entry name" value="EF_hand_dom"/>
</dbReference>
<dbReference type="InterPro" id="IPR007110">
    <property type="entry name" value="Ig-like_dom"/>
</dbReference>
<dbReference type="InterPro" id="IPR036179">
    <property type="entry name" value="Ig-like_dom_sf"/>
</dbReference>
<dbReference type="InterPro" id="IPR013783">
    <property type="entry name" value="Ig-like_fold"/>
</dbReference>
<dbReference type="InterPro" id="IPR003599">
    <property type="entry name" value="Ig_sub"/>
</dbReference>
<dbReference type="InterPro" id="IPR003598">
    <property type="entry name" value="Ig_sub2"/>
</dbReference>
<dbReference type="InterPro" id="IPR002350">
    <property type="entry name" value="Kazal_dom"/>
</dbReference>
<dbReference type="InterPro" id="IPR036058">
    <property type="entry name" value="Kazal_dom_sf"/>
</dbReference>
<dbReference type="InterPro" id="IPR050653">
    <property type="entry name" value="Prot_Inhib_GrowthFact_Antg"/>
</dbReference>
<dbReference type="InterPro" id="IPR015943">
    <property type="entry name" value="WD40/YVTN_repeat-like_dom_sf"/>
</dbReference>
<dbReference type="PANTHER" id="PTHR10913">
    <property type="entry name" value="FOLLISTATIN-RELATED"/>
    <property type="match status" value="1"/>
</dbReference>
<dbReference type="PANTHER" id="PTHR10913:SF44">
    <property type="entry name" value="FOLLISTATIN-RELATED PROTEIN 5"/>
    <property type="match status" value="1"/>
</dbReference>
<dbReference type="Pfam" id="PF13927">
    <property type="entry name" value="Ig_3"/>
    <property type="match status" value="2"/>
</dbReference>
<dbReference type="Pfam" id="PF07648">
    <property type="entry name" value="Kazal_2"/>
    <property type="match status" value="1"/>
</dbReference>
<dbReference type="SMART" id="SM00409">
    <property type="entry name" value="IG"/>
    <property type="match status" value="2"/>
</dbReference>
<dbReference type="SMART" id="SM00408">
    <property type="entry name" value="IGc2"/>
    <property type="match status" value="2"/>
</dbReference>
<dbReference type="SMART" id="SM00280">
    <property type="entry name" value="KAZAL"/>
    <property type="match status" value="1"/>
</dbReference>
<dbReference type="SUPFAM" id="SSF75011">
    <property type="entry name" value="3-carboxy-cis,cis-mucoante lactonizing enzyme"/>
    <property type="match status" value="1"/>
</dbReference>
<dbReference type="SUPFAM" id="SSF47473">
    <property type="entry name" value="EF-hand"/>
    <property type="match status" value="1"/>
</dbReference>
<dbReference type="SUPFAM" id="SSF48726">
    <property type="entry name" value="Immunoglobulin"/>
    <property type="match status" value="2"/>
</dbReference>
<dbReference type="SUPFAM" id="SSF100895">
    <property type="entry name" value="Kazal-type serine protease inhibitors"/>
    <property type="match status" value="1"/>
</dbReference>
<dbReference type="PROSITE" id="PS00018">
    <property type="entry name" value="EF_HAND_1"/>
    <property type="match status" value="2"/>
</dbReference>
<dbReference type="PROSITE" id="PS50222">
    <property type="entry name" value="EF_HAND_2"/>
    <property type="match status" value="1"/>
</dbReference>
<dbReference type="PROSITE" id="PS50835">
    <property type="entry name" value="IG_LIKE"/>
    <property type="match status" value="2"/>
</dbReference>
<dbReference type="PROSITE" id="PS51465">
    <property type="entry name" value="KAZAL_2"/>
    <property type="match status" value="1"/>
</dbReference>
<feature type="signal peptide" evidence="2">
    <location>
        <begin position="1"/>
        <end position="20"/>
    </location>
</feature>
<feature type="chain" id="PRO_0000010119" description="Follistatin-related protein 5">
    <location>
        <begin position="21"/>
        <end position="847"/>
    </location>
</feature>
<feature type="domain" description="Kazal-like" evidence="4">
    <location>
        <begin position="81"/>
        <end position="135"/>
    </location>
</feature>
<feature type="domain" description="EF-hand 1" evidence="3">
    <location>
        <begin position="175"/>
        <end position="210"/>
    </location>
</feature>
<feature type="domain" description="EF-hand 2" evidence="6">
    <location>
        <begin position="211"/>
        <end position="246"/>
    </location>
</feature>
<feature type="domain" description="Ig-like 1">
    <location>
        <begin position="250"/>
        <end position="338"/>
    </location>
</feature>
<feature type="domain" description="Ig-like 2">
    <location>
        <begin position="341"/>
        <end position="426"/>
    </location>
</feature>
<feature type="binding site" evidence="3">
    <location>
        <position position="188"/>
    </location>
    <ligand>
        <name>Ca(2+)</name>
        <dbReference type="ChEBI" id="CHEBI:29108"/>
        <label>1</label>
    </ligand>
</feature>
<feature type="binding site" evidence="3">
    <location>
        <position position="190"/>
    </location>
    <ligand>
        <name>Ca(2+)</name>
        <dbReference type="ChEBI" id="CHEBI:29108"/>
        <label>1</label>
    </ligand>
</feature>
<feature type="binding site" evidence="3">
    <location>
        <position position="192"/>
    </location>
    <ligand>
        <name>Ca(2+)</name>
        <dbReference type="ChEBI" id="CHEBI:29108"/>
        <label>1</label>
    </ligand>
</feature>
<feature type="binding site" evidence="3">
    <location>
        <position position="199"/>
    </location>
    <ligand>
        <name>Ca(2+)</name>
        <dbReference type="ChEBI" id="CHEBI:29108"/>
        <label>1</label>
    </ligand>
</feature>
<feature type="binding site" evidence="5">
    <location>
        <position position="226"/>
    </location>
    <ligand>
        <name>Ca(2+)</name>
        <dbReference type="ChEBI" id="CHEBI:29108"/>
        <label>2</label>
    </ligand>
</feature>
<feature type="binding site" evidence="5">
    <location>
        <position position="228"/>
    </location>
    <ligand>
        <name>Ca(2+)</name>
        <dbReference type="ChEBI" id="CHEBI:29108"/>
        <label>2</label>
    </ligand>
</feature>
<feature type="binding site" evidence="5">
    <location>
        <position position="230"/>
    </location>
    <ligand>
        <name>Ca(2+)</name>
        <dbReference type="ChEBI" id="CHEBI:29108"/>
        <label>2</label>
    </ligand>
</feature>
<feature type="binding site" evidence="5">
    <location>
        <position position="232"/>
    </location>
    <ligand>
        <name>Ca(2+)</name>
        <dbReference type="ChEBI" id="CHEBI:29108"/>
        <label>2</label>
    </ligand>
</feature>
<feature type="binding site" evidence="5">
    <location>
        <position position="237"/>
    </location>
    <ligand>
        <name>Ca(2+)</name>
        <dbReference type="ChEBI" id="CHEBI:29108"/>
        <label>2</label>
    </ligand>
</feature>
<feature type="glycosylation site" description="N-linked (GlcNAc...) asparagine" evidence="2">
    <location>
        <position position="318"/>
    </location>
</feature>
<feature type="glycosylation site" description="N-linked (GlcNAc...) asparagine" evidence="2">
    <location>
        <position position="394"/>
    </location>
</feature>
<feature type="disulfide bond" evidence="4">
    <location>
        <begin position="87"/>
        <end position="119"/>
    </location>
</feature>
<feature type="disulfide bond" evidence="4">
    <location>
        <begin position="93"/>
        <end position="112"/>
    </location>
</feature>
<feature type="disulfide bond" evidence="4">
    <location>
        <begin position="101"/>
        <end position="133"/>
    </location>
</feature>
<feature type="disulfide bond" evidence="1">
    <location>
        <begin position="270"/>
        <end position="321"/>
    </location>
</feature>
<feature type="disulfide bond" evidence="1">
    <location>
        <begin position="362"/>
        <end position="413"/>
    </location>
</feature>
<feature type="sequence conflict" description="In Ref. 2; BAC38146." evidence="6" ref="2">
    <original>M</original>
    <variation>R</variation>
    <location>
        <position position="183"/>
    </location>
</feature>
<feature type="sequence conflict" description="In Ref. 4; BAC65764." evidence="6" ref="4">
    <original>T</original>
    <variation>R</variation>
    <location>
        <position position="468"/>
    </location>
</feature>
<feature type="sequence conflict" description="In Ref. 4; BAC65764." evidence="6" ref="4">
    <original>T</original>
    <variation>I</variation>
    <location>
        <position position="840"/>
    </location>
</feature>
<comment type="subcellular location">
    <subcellularLocation>
        <location evidence="6">Secreted</location>
    </subcellularLocation>
</comment>
<name>FSTL5_MOUSE</name>
<proteinExistence type="evidence at transcript level"/>